<proteinExistence type="inferred from homology"/>
<keyword id="KW-0687">Ribonucleoprotein</keyword>
<keyword id="KW-0689">Ribosomal protein</keyword>
<comment type="similarity">
    <text evidence="1">Belongs to the bacterial ribosomal protein bL36 family.</text>
</comment>
<evidence type="ECO:0000255" key="1">
    <source>
        <dbReference type="HAMAP-Rule" id="MF_00251"/>
    </source>
</evidence>
<evidence type="ECO:0000305" key="2"/>
<feature type="chain" id="PRO_1000078474" description="Large ribosomal subunit protein bL36">
    <location>
        <begin position="1"/>
        <end position="38"/>
    </location>
</feature>
<name>RL36_FLAJ1</name>
<gene>
    <name evidence="1" type="primary">rpmJ</name>
    <name type="ordered locus">Fjoh_0375</name>
</gene>
<protein>
    <recommendedName>
        <fullName evidence="1">Large ribosomal subunit protein bL36</fullName>
    </recommendedName>
    <alternativeName>
        <fullName evidence="2">50S ribosomal protein L36</fullName>
    </alternativeName>
</protein>
<dbReference type="EMBL" id="CP000685">
    <property type="protein sequence ID" value="ABQ03411.1"/>
    <property type="molecule type" value="Genomic_DNA"/>
</dbReference>
<dbReference type="SMR" id="A5FMZ9"/>
<dbReference type="STRING" id="376686.Fjoh_0375"/>
<dbReference type="KEGG" id="fjo:Fjoh_0375"/>
<dbReference type="eggNOG" id="COG0257">
    <property type="taxonomic scope" value="Bacteria"/>
</dbReference>
<dbReference type="HOGENOM" id="CLU_135723_3_3_10"/>
<dbReference type="OrthoDB" id="9801558at2"/>
<dbReference type="Proteomes" id="UP000006694">
    <property type="component" value="Chromosome"/>
</dbReference>
<dbReference type="GO" id="GO:1990904">
    <property type="term" value="C:ribonucleoprotein complex"/>
    <property type="evidence" value="ECO:0007669"/>
    <property type="project" value="UniProtKB-KW"/>
</dbReference>
<dbReference type="GO" id="GO:0005840">
    <property type="term" value="C:ribosome"/>
    <property type="evidence" value="ECO:0007669"/>
    <property type="project" value="UniProtKB-KW"/>
</dbReference>
<dbReference type="GO" id="GO:0003735">
    <property type="term" value="F:structural constituent of ribosome"/>
    <property type="evidence" value="ECO:0007669"/>
    <property type="project" value="InterPro"/>
</dbReference>
<dbReference type="GO" id="GO:0006412">
    <property type="term" value="P:translation"/>
    <property type="evidence" value="ECO:0007669"/>
    <property type="project" value="UniProtKB-UniRule"/>
</dbReference>
<dbReference type="HAMAP" id="MF_00251">
    <property type="entry name" value="Ribosomal_bL36"/>
    <property type="match status" value="1"/>
</dbReference>
<dbReference type="InterPro" id="IPR000473">
    <property type="entry name" value="Ribosomal_bL36"/>
</dbReference>
<dbReference type="InterPro" id="IPR035977">
    <property type="entry name" value="Ribosomal_bL36_sp"/>
</dbReference>
<dbReference type="InterPro" id="IPR047621">
    <property type="entry name" value="Ribosomal_L36_bact"/>
</dbReference>
<dbReference type="NCBIfam" id="NF002021">
    <property type="entry name" value="PRK00831.1"/>
    <property type="match status" value="1"/>
</dbReference>
<dbReference type="NCBIfam" id="TIGR01022">
    <property type="entry name" value="rpmJ_bact"/>
    <property type="match status" value="1"/>
</dbReference>
<dbReference type="PANTHER" id="PTHR47781">
    <property type="entry name" value="50S RIBOSOMAL PROTEIN L36 2"/>
    <property type="match status" value="1"/>
</dbReference>
<dbReference type="PANTHER" id="PTHR47781:SF1">
    <property type="entry name" value="LARGE RIBOSOMAL SUBUNIT PROTEIN BL36B"/>
    <property type="match status" value="1"/>
</dbReference>
<dbReference type="Pfam" id="PF00444">
    <property type="entry name" value="Ribosomal_L36"/>
    <property type="match status" value="1"/>
</dbReference>
<dbReference type="SUPFAM" id="SSF57840">
    <property type="entry name" value="Ribosomal protein L36"/>
    <property type="match status" value="1"/>
</dbReference>
<dbReference type="PROSITE" id="PS00828">
    <property type="entry name" value="RIBOSOMAL_L36"/>
    <property type="match status" value="1"/>
</dbReference>
<accession>A5FMZ9</accession>
<sequence length="38" mass="4544">MKVRASVKKRSAECIIVRRKGRLYVINKKNPRFKQRQG</sequence>
<organism>
    <name type="scientific">Flavobacterium johnsoniae (strain ATCC 17061 / DSM 2064 / JCM 8514 / BCRC 14874 / CCUG 350202 / NBRC 14942 / NCIMB 11054 / UW101)</name>
    <name type="common">Cytophaga johnsonae</name>
    <dbReference type="NCBI Taxonomy" id="376686"/>
    <lineage>
        <taxon>Bacteria</taxon>
        <taxon>Pseudomonadati</taxon>
        <taxon>Bacteroidota</taxon>
        <taxon>Flavobacteriia</taxon>
        <taxon>Flavobacteriales</taxon>
        <taxon>Flavobacteriaceae</taxon>
        <taxon>Flavobacterium</taxon>
    </lineage>
</organism>
<reference key="1">
    <citation type="journal article" date="2009" name="Appl. Environ. Microbiol.">
        <title>Novel features of the polysaccharide-digesting gliding bacterium Flavobacterium johnsoniae as revealed by genome sequence analysis.</title>
        <authorList>
            <person name="McBride M.J."/>
            <person name="Xie G."/>
            <person name="Martens E.C."/>
            <person name="Lapidus A."/>
            <person name="Henrissat B."/>
            <person name="Rhodes R.G."/>
            <person name="Goltsman E."/>
            <person name="Wang W."/>
            <person name="Xu J."/>
            <person name="Hunnicutt D.W."/>
            <person name="Staroscik A.M."/>
            <person name="Hoover T.R."/>
            <person name="Cheng Y.Q."/>
            <person name="Stein J.L."/>
        </authorList>
    </citation>
    <scope>NUCLEOTIDE SEQUENCE [LARGE SCALE GENOMIC DNA]</scope>
    <source>
        <strain>ATCC 17061 / DSM 2064 / JCM 8514 / BCRC 14874 / CCUG 350202 / NBRC 14942 / NCIMB 11054 / UW101</strain>
    </source>
</reference>